<reference key="1">
    <citation type="journal article" date="2011" name="PLoS Genet.">
        <title>Genomic analysis of the necrotrophic fungal pathogens Sclerotinia sclerotiorum and Botrytis cinerea.</title>
        <authorList>
            <person name="Amselem J."/>
            <person name="Cuomo C.A."/>
            <person name="van Kan J.A.L."/>
            <person name="Viaud M."/>
            <person name="Benito E.P."/>
            <person name="Couloux A."/>
            <person name="Coutinho P.M."/>
            <person name="de Vries R.P."/>
            <person name="Dyer P.S."/>
            <person name="Fillinger S."/>
            <person name="Fournier E."/>
            <person name="Gout L."/>
            <person name="Hahn M."/>
            <person name="Kohn L."/>
            <person name="Lapalu N."/>
            <person name="Plummer K.M."/>
            <person name="Pradier J.-M."/>
            <person name="Quevillon E."/>
            <person name="Sharon A."/>
            <person name="Simon A."/>
            <person name="ten Have A."/>
            <person name="Tudzynski B."/>
            <person name="Tudzynski P."/>
            <person name="Wincker P."/>
            <person name="Andrew M."/>
            <person name="Anthouard V."/>
            <person name="Beever R.E."/>
            <person name="Beffa R."/>
            <person name="Benoit I."/>
            <person name="Bouzid O."/>
            <person name="Brault B."/>
            <person name="Chen Z."/>
            <person name="Choquer M."/>
            <person name="Collemare J."/>
            <person name="Cotton P."/>
            <person name="Danchin E.G."/>
            <person name="Da Silva C."/>
            <person name="Gautier A."/>
            <person name="Giraud C."/>
            <person name="Giraud T."/>
            <person name="Gonzalez C."/>
            <person name="Grossetete S."/>
            <person name="Gueldener U."/>
            <person name="Henrissat B."/>
            <person name="Howlett B.J."/>
            <person name="Kodira C."/>
            <person name="Kretschmer M."/>
            <person name="Lappartient A."/>
            <person name="Leroch M."/>
            <person name="Levis C."/>
            <person name="Mauceli E."/>
            <person name="Neuveglise C."/>
            <person name="Oeser B."/>
            <person name="Pearson M."/>
            <person name="Poulain J."/>
            <person name="Poussereau N."/>
            <person name="Quesneville H."/>
            <person name="Rascle C."/>
            <person name="Schumacher J."/>
            <person name="Segurens B."/>
            <person name="Sexton A."/>
            <person name="Silva E."/>
            <person name="Sirven C."/>
            <person name="Soanes D.M."/>
            <person name="Talbot N.J."/>
            <person name="Templeton M."/>
            <person name="Yandava C."/>
            <person name="Yarden O."/>
            <person name="Zeng Q."/>
            <person name="Rollins J.A."/>
            <person name="Lebrun M.-H."/>
            <person name="Dickman M."/>
        </authorList>
    </citation>
    <scope>NUCLEOTIDE SEQUENCE [LARGE SCALE GENOMIC DNA]</scope>
    <source>
        <strain>B05.10</strain>
    </source>
</reference>
<reference key="2">
    <citation type="journal article" date="2012" name="Eukaryot. Cell">
        <title>Genome update of Botrytis cinerea strains B05.10 and T4.</title>
        <authorList>
            <person name="Staats M."/>
            <person name="van Kan J.A.L."/>
        </authorList>
    </citation>
    <scope>NUCLEOTIDE SEQUENCE [LARGE SCALE GENOMIC DNA]</scope>
    <scope>GENOME REANNOTATION</scope>
    <source>
        <strain>B05.10</strain>
    </source>
</reference>
<reference key="3">
    <citation type="journal article" date="2017" name="Mol. Plant Pathol.">
        <title>A gapless genome sequence of the fungus Botrytis cinerea.</title>
        <authorList>
            <person name="van Kan J.A.L."/>
            <person name="Stassen J.H.M."/>
            <person name="Mosbach A."/>
            <person name="van der Lee T.A.J."/>
            <person name="Faino L."/>
            <person name="Farmer A.D."/>
            <person name="Papasotiriou D.G."/>
            <person name="Zhou S."/>
            <person name="Seidl M.F."/>
            <person name="Cottam E."/>
            <person name="Edel D."/>
            <person name="Hahn M."/>
            <person name="Schwartz D.C."/>
            <person name="Dietrich R.A."/>
            <person name="Widdison S."/>
            <person name="Scalliet G."/>
        </authorList>
    </citation>
    <scope>NUCLEOTIDE SEQUENCE [LARGE SCALE GENOMIC DNA]</scope>
    <scope>GENOME REANNOTATION</scope>
    <source>
        <strain>B05.10</strain>
    </source>
</reference>
<evidence type="ECO:0000255" key="1">
    <source>
        <dbReference type="HAMAP-Rule" id="MF_03175"/>
    </source>
</evidence>
<evidence type="ECO:0000256" key="2">
    <source>
        <dbReference type="SAM" id="MobiDB-lite"/>
    </source>
</evidence>
<feature type="chain" id="PRO_0000407644" description="Methionine aminopeptidase 2">
    <location>
        <begin position="1"/>
        <end position="448"/>
    </location>
</feature>
<feature type="region of interest" description="Disordered" evidence="2">
    <location>
        <begin position="1"/>
        <end position="94"/>
    </location>
</feature>
<feature type="compositionally biased region" description="Acidic residues" evidence="2">
    <location>
        <begin position="37"/>
        <end position="50"/>
    </location>
</feature>
<feature type="compositionally biased region" description="Basic residues" evidence="2">
    <location>
        <begin position="61"/>
        <end position="74"/>
    </location>
</feature>
<feature type="binding site" evidence="1">
    <location>
        <position position="201"/>
    </location>
    <ligand>
        <name>substrate</name>
    </ligand>
</feature>
<feature type="binding site" evidence="1">
    <location>
        <position position="221"/>
    </location>
    <ligand>
        <name>a divalent metal cation</name>
        <dbReference type="ChEBI" id="CHEBI:60240"/>
        <label>1</label>
    </ligand>
</feature>
<feature type="binding site" evidence="1">
    <location>
        <position position="232"/>
    </location>
    <ligand>
        <name>a divalent metal cation</name>
        <dbReference type="ChEBI" id="CHEBI:60240"/>
        <label>1</label>
    </ligand>
</feature>
<feature type="binding site" evidence="1">
    <location>
        <position position="232"/>
    </location>
    <ligand>
        <name>a divalent metal cation</name>
        <dbReference type="ChEBI" id="CHEBI:60240"/>
        <label>2</label>
        <note>catalytic</note>
    </ligand>
</feature>
<feature type="binding site" evidence="1">
    <location>
        <position position="301"/>
    </location>
    <ligand>
        <name>a divalent metal cation</name>
        <dbReference type="ChEBI" id="CHEBI:60240"/>
        <label>2</label>
        <note>catalytic</note>
    </ligand>
</feature>
<feature type="binding site" evidence="1">
    <location>
        <position position="309"/>
    </location>
    <ligand>
        <name>substrate</name>
    </ligand>
</feature>
<feature type="binding site" evidence="1">
    <location>
        <position position="334"/>
    </location>
    <ligand>
        <name>a divalent metal cation</name>
        <dbReference type="ChEBI" id="CHEBI:60240"/>
        <label>2</label>
        <note>catalytic</note>
    </ligand>
</feature>
<feature type="binding site" evidence="1">
    <location>
        <position position="429"/>
    </location>
    <ligand>
        <name>a divalent metal cation</name>
        <dbReference type="ChEBI" id="CHEBI:60240"/>
        <label>1</label>
    </ligand>
</feature>
<feature type="binding site" evidence="1">
    <location>
        <position position="429"/>
    </location>
    <ligand>
        <name>a divalent metal cation</name>
        <dbReference type="ChEBI" id="CHEBI:60240"/>
        <label>2</label>
        <note>catalytic</note>
    </ligand>
</feature>
<comment type="function">
    <text evidence="1">Cotranslationally removes the N-terminal methionine from nascent proteins. The N-terminal methionine is often cleaved when the second residue in the primary sequence is small and uncharged (Met-Ala-, Cys, Gly, Pro, Ser, Thr, or Val).</text>
</comment>
<comment type="catalytic activity">
    <reaction evidence="1">
        <text>Release of N-terminal amino acids, preferentially methionine, from peptides and arylamides.</text>
        <dbReference type="EC" id="3.4.11.18"/>
    </reaction>
</comment>
<comment type="cofactor">
    <cofactor evidence="1">
        <name>Co(2+)</name>
        <dbReference type="ChEBI" id="CHEBI:48828"/>
    </cofactor>
    <cofactor evidence="1">
        <name>Zn(2+)</name>
        <dbReference type="ChEBI" id="CHEBI:29105"/>
    </cofactor>
    <cofactor evidence="1">
        <name>Mn(2+)</name>
        <dbReference type="ChEBI" id="CHEBI:29035"/>
    </cofactor>
    <cofactor evidence="1">
        <name>Fe(2+)</name>
        <dbReference type="ChEBI" id="CHEBI:29033"/>
    </cofactor>
    <text evidence="1">Binds 2 divalent metal cations per subunit. Has a high-affinity and a low affinity metal-binding site. The true nature of the physiological cofactor is under debate. The enzyme is active with cobalt, zinc, manganese or divalent iron ions. Most likely, methionine aminopeptidases function as mononuclear Fe(2+)-metalloproteases under physiological conditions, and the catalytically relevant metal-binding site has been assigned to the histidine-containing high-affinity site.</text>
</comment>
<comment type="subcellular location">
    <subcellularLocation>
        <location evidence="1">Cytoplasm</location>
    </subcellularLocation>
</comment>
<comment type="similarity">
    <text evidence="1">Belongs to the peptidase M24A family. Methionine aminopeptidase eukaryotic type 2 subfamily.</text>
</comment>
<dbReference type="EC" id="3.4.11.18" evidence="1"/>
<dbReference type="EMBL" id="CP009808">
    <property type="protein sequence ID" value="ATZ49283.1"/>
    <property type="molecule type" value="Genomic_DNA"/>
</dbReference>
<dbReference type="RefSeq" id="XP_001557579.1">
    <property type="nucleotide sequence ID" value="XM_001557529.1"/>
</dbReference>
<dbReference type="SMR" id="A6RTU0"/>
<dbReference type="EnsemblFungi" id="Bcin04g04520.1">
    <property type="protein sequence ID" value="Bcin04p04520.1"/>
    <property type="gene ID" value="Bcin04g04520"/>
</dbReference>
<dbReference type="GeneID" id="5438178"/>
<dbReference type="KEGG" id="bfu:BCIN_04g04520"/>
<dbReference type="VEuPathDB" id="FungiDB:Bcin04g04520"/>
<dbReference type="OMA" id="PFAKRWL"/>
<dbReference type="OrthoDB" id="7848262at2759"/>
<dbReference type="Proteomes" id="UP000001798">
    <property type="component" value="Chromosome bcin04"/>
</dbReference>
<dbReference type="GO" id="GO:0005737">
    <property type="term" value="C:cytoplasm"/>
    <property type="evidence" value="ECO:0007669"/>
    <property type="project" value="UniProtKB-SubCell"/>
</dbReference>
<dbReference type="GO" id="GO:0004239">
    <property type="term" value="F:initiator methionyl aminopeptidase activity"/>
    <property type="evidence" value="ECO:0007669"/>
    <property type="project" value="UniProtKB-UniRule"/>
</dbReference>
<dbReference type="GO" id="GO:0046872">
    <property type="term" value="F:metal ion binding"/>
    <property type="evidence" value="ECO:0007669"/>
    <property type="project" value="UniProtKB-UniRule"/>
</dbReference>
<dbReference type="GO" id="GO:0070006">
    <property type="term" value="F:metalloaminopeptidase activity"/>
    <property type="evidence" value="ECO:0007669"/>
    <property type="project" value="UniProtKB-UniRule"/>
</dbReference>
<dbReference type="GO" id="GO:0006508">
    <property type="term" value="P:proteolysis"/>
    <property type="evidence" value="ECO:0007669"/>
    <property type="project" value="UniProtKB-KW"/>
</dbReference>
<dbReference type="CDD" id="cd01088">
    <property type="entry name" value="MetAP2"/>
    <property type="match status" value="1"/>
</dbReference>
<dbReference type="Gene3D" id="3.90.230.10">
    <property type="entry name" value="Creatinase/methionine aminopeptidase superfamily"/>
    <property type="match status" value="1"/>
</dbReference>
<dbReference type="Gene3D" id="1.10.10.10">
    <property type="entry name" value="Winged helix-like DNA-binding domain superfamily/Winged helix DNA-binding domain"/>
    <property type="match status" value="1"/>
</dbReference>
<dbReference type="HAMAP" id="MF_03175">
    <property type="entry name" value="MetAP_2_euk"/>
    <property type="match status" value="1"/>
</dbReference>
<dbReference type="InterPro" id="IPR036005">
    <property type="entry name" value="Creatinase/aminopeptidase-like"/>
</dbReference>
<dbReference type="InterPro" id="IPR050247">
    <property type="entry name" value="Met_Aminopeptidase_Type2"/>
</dbReference>
<dbReference type="InterPro" id="IPR000994">
    <property type="entry name" value="Pept_M24"/>
</dbReference>
<dbReference type="InterPro" id="IPR001714">
    <property type="entry name" value="Pept_M24_MAP"/>
</dbReference>
<dbReference type="InterPro" id="IPR002468">
    <property type="entry name" value="Pept_M24A_MAP2"/>
</dbReference>
<dbReference type="InterPro" id="IPR036388">
    <property type="entry name" value="WH-like_DNA-bd_sf"/>
</dbReference>
<dbReference type="InterPro" id="IPR036390">
    <property type="entry name" value="WH_DNA-bd_sf"/>
</dbReference>
<dbReference type="NCBIfam" id="TIGR00501">
    <property type="entry name" value="met_pdase_II"/>
    <property type="match status" value="1"/>
</dbReference>
<dbReference type="PANTHER" id="PTHR45777">
    <property type="entry name" value="METHIONINE AMINOPEPTIDASE 2"/>
    <property type="match status" value="1"/>
</dbReference>
<dbReference type="PANTHER" id="PTHR45777:SF2">
    <property type="entry name" value="METHIONINE AMINOPEPTIDASE 2"/>
    <property type="match status" value="1"/>
</dbReference>
<dbReference type="Pfam" id="PF00557">
    <property type="entry name" value="Peptidase_M24"/>
    <property type="match status" value="1"/>
</dbReference>
<dbReference type="PRINTS" id="PR00599">
    <property type="entry name" value="MAPEPTIDASE"/>
</dbReference>
<dbReference type="SUPFAM" id="SSF55920">
    <property type="entry name" value="Creatinase/aminopeptidase"/>
    <property type="match status" value="1"/>
</dbReference>
<dbReference type="SUPFAM" id="SSF46785">
    <property type="entry name" value="Winged helix' DNA-binding domain"/>
    <property type="match status" value="1"/>
</dbReference>
<sequence length="448" mass="49382">MAAQVTDALKNLKVKDPNAVVESAAEAKANGNAQPEAEAEDSDDDDEEPVNGEGAGEGGAKKKRKRKKKPKKKAGANPKVQSSPPRVLLSNLFPSGEYPVGEEVEYRDENNYRTTSEEKRYLDRMNNDFLQEYRQGAEIHRQVRQYAKANIKPGQTLTEIAEGIEDSVRALTGHPGLEEGDNIKGGVAFPTGVNLDHIAAHYSPNAGNKTVLAYENVMKVDFGVHINGRIVDSAFTIAFDPMYDNLLEAVKQATNTGIKEAGIDARLGEIGEHIQETMESYEVEIKGQTYQVKPIRNLNGHDILQWKIHGGKSVPIVKSNDQTKMEEGEVFAIETFGSTGNGYVRDDLECSHYAKVADAPNVPLRIASAGKLLNVINKNFGTLPFCRRYLDRLGQDKYLLGLNALVSHGIVQDYPPLVDKKGSYTAQFEHTIVLRPNCKEVISRGDDY</sequence>
<accession>A6RTU0</accession>
<accession>A0A384JF95</accession>
<keyword id="KW-0031">Aminopeptidase</keyword>
<keyword id="KW-0963">Cytoplasm</keyword>
<keyword id="KW-0378">Hydrolase</keyword>
<keyword id="KW-0479">Metal-binding</keyword>
<keyword id="KW-0645">Protease</keyword>
<keyword id="KW-1185">Reference proteome</keyword>
<proteinExistence type="inferred from homology"/>
<name>MAP2_BOTFB</name>
<organism>
    <name type="scientific">Botryotinia fuckeliana (strain B05.10)</name>
    <name type="common">Noble rot fungus</name>
    <name type="synonym">Botrytis cinerea</name>
    <dbReference type="NCBI Taxonomy" id="332648"/>
    <lineage>
        <taxon>Eukaryota</taxon>
        <taxon>Fungi</taxon>
        <taxon>Dikarya</taxon>
        <taxon>Ascomycota</taxon>
        <taxon>Pezizomycotina</taxon>
        <taxon>Leotiomycetes</taxon>
        <taxon>Helotiales</taxon>
        <taxon>Sclerotiniaceae</taxon>
        <taxon>Botrytis</taxon>
    </lineage>
</organism>
<gene>
    <name type="ORF">BC1G_04189</name>
    <name type="ORF">BCIN_04g04520</name>
</gene>
<protein>
    <recommendedName>
        <fullName evidence="1">Methionine aminopeptidase 2</fullName>
        <shortName evidence="1">MAP 2</shortName>
        <shortName evidence="1">MetAP 2</shortName>
        <ecNumber evidence="1">3.4.11.18</ecNumber>
    </recommendedName>
    <alternativeName>
        <fullName evidence="1">Peptidase M</fullName>
    </alternativeName>
</protein>